<reference key="1">
    <citation type="journal article" date="2005" name="Science">
        <title>The transcriptional landscape of the mammalian genome.</title>
        <authorList>
            <person name="Carninci P."/>
            <person name="Kasukawa T."/>
            <person name="Katayama S."/>
            <person name="Gough J."/>
            <person name="Frith M.C."/>
            <person name="Maeda N."/>
            <person name="Oyama R."/>
            <person name="Ravasi T."/>
            <person name="Lenhard B."/>
            <person name="Wells C."/>
            <person name="Kodzius R."/>
            <person name="Shimokawa K."/>
            <person name="Bajic V.B."/>
            <person name="Brenner S.E."/>
            <person name="Batalov S."/>
            <person name="Forrest A.R."/>
            <person name="Zavolan M."/>
            <person name="Davis M.J."/>
            <person name="Wilming L.G."/>
            <person name="Aidinis V."/>
            <person name="Allen J.E."/>
            <person name="Ambesi-Impiombato A."/>
            <person name="Apweiler R."/>
            <person name="Aturaliya R.N."/>
            <person name="Bailey T.L."/>
            <person name="Bansal M."/>
            <person name="Baxter L."/>
            <person name="Beisel K.W."/>
            <person name="Bersano T."/>
            <person name="Bono H."/>
            <person name="Chalk A.M."/>
            <person name="Chiu K.P."/>
            <person name="Choudhary V."/>
            <person name="Christoffels A."/>
            <person name="Clutterbuck D.R."/>
            <person name="Crowe M.L."/>
            <person name="Dalla E."/>
            <person name="Dalrymple B.P."/>
            <person name="de Bono B."/>
            <person name="Della Gatta G."/>
            <person name="di Bernardo D."/>
            <person name="Down T."/>
            <person name="Engstrom P."/>
            <person name="Fagiolini M."/>
            <person name="Faulkner G."/>
            <person name="Fletcher C.F."/>
            <person name="Fukushima T."/>
            <person name="Furuno M."/>
            <person name="Futaki S."/>
            <person name="Gariboldi M."/>
            <person name="Georgii-Hemming P."/>
            <person name="Gingeras T.R."/>
            <person name="Gojobori T."/>
            <person name="Green R.E."/>
            <person name="Gustincich S."/>
            <person name="Harbers M."/>
            <person name="Hayashi Y."/>
            <person name="Hensch T.K."/>
            <person name="Hirokawa N."/>
            <person name="Hill D."/>
            <person name="Huminiecki L."/>
            <person name="Iacono M."/>
            <person name="Ikeo K."/>
            <person name="Iwama A."/>
            <person name="Ishikawa T."/>
            <person name="Jakt M."/>
            <person name="Kanapin A."/>
            <person name="Katoh M."/>
            <person name="Kawasawa Y."/>
            <person name="Kelso J."/>
            <person name="Kitamura H."/>
            <person name="Kitano H."/>
            <person name="Kollias G."/>
            <person name="Krishnan S.P."/>
            <person name="Kruger A."/>
            <person name="Kummerfeld S.K."/>
            <person name="Kurochkin I.V."/>
            <person name="Lareau L.F."/>
            <person name="Lazarevic D."/>
            <person name="Lipovich L."/>
            <person name="Liu J."/>
            <person name="Liuni S."/>
            <person name="McWilliam S."/>
            <person name="Madan Babu M."/>
            <person name="Madera M."/>
            <person name="Marchionni L."/>
            <person name="Matsuda H."/>
            <person name="Matsuzawa S."/>
            <person name="Miki H."/>
            <person name="Mignone F."/>
            <person name="Miyake S."/>
            <person name="Morris K."/>
            <person name="Mottagui-Tabar S."/>
            <person name="Mulder N."/>
            <person name="Nakano N."/>
            <person name="Nakauchi H."/>
            <person name="Ng P."/>
            <person name="Nilsson R."/>
            <person name="Nishiguchi S."/>
            <person name="Nishikawa S."/>
            <person name="Nori F."/>
            <person name="Ohara O."/>
            <person name="Okazaki Y."/>
            <person name="Orlando V."/>
            <person name="Pang K.C."/>
            <person name="Pavan W.J."/>
            <person name="Pavesi G."/>
            <person name="Pesole G."/>
            <person name="Petrovsky N."/>
            <person name="Piazza S."/>
            <person name="Reed J."/>
            <person name="Reid J.F."/>
            <person name="Ring B.Z."/>
            <person name="Ringwald M."/>
            <person name="Rost B."/>
            <person name="Ruan Y."/>
            <person name="Salzberg S.L."/>
            <person name="Sandelin A."/>
            <person name="Schneider C."/>
            <person name="Schoenbach C."/>
            <person name="Sekiguchi K."/>
            <person name="Semple C.A."/>
            <person name="Seno S."/>
            <person name="Sessa L."/>
            <person name="Sheng Y."/>
            <person name="Shibata Y."/>
            <person name="Shimada H."/>
            <person name="Shimada K."/>
            <person name="Silva D."/>
            <person name="Sinclair B."/>
            <person name="Sperling S."/>
            <person name="Stupka E."/>
            <person name="Sugiura K."/>
            <person name="Sultana R."/>
            <person name="Takenaka Y."/>
            <person name="Taki K."/>
            <person name="Tammoja K."/>
            <person name="Tan S.L."/>
            <person name="Tang S."/>
            <person name="Taylor M.S."/>
            <person name="Tegner J."/>
            <person name="Teichmann S.A."/>
            <person name="Ueda H.R."/>
            <person name="van Nimwegen E."/>
            <person name="Verardo R."/>
            <person name="Wei C.L."/>
            <person name="Yagi K."/>
            <person name="Yamanishi H."/>
            <person name="Zabarovsky E."/>
            <person name="Zhu S."/>
            <person name="Zimmer A."/>
            <person name="Hide W."/>
            <person name="Bult C."/>
            <person name="Grimmond S.M."/>
            <person name="Teasdale R.D."/>
            <person name="Liu E.T."/>
            <person name="Brusic V."/>
            <person name="Quackenbush J."/>
            <person name="Wahlestedt C."/>
            <person name="Mattick J.S."/>
            <person name="Hume D.A."/>
            <person name="Kai C."/>
            <person name="Sasaki D."/>
            <person name="Tomaru Y."/>
            <person name="Fukuda S."/>
            <person name="Kanamori-Katayama M."/>
            <person name="Suzuki M."/>
            <person name="Aoki J."/>
            <person name="Arakawa T."/>
            <person name="Iida J."/>
            <person name="Imamura K."/>
            <person name="Itoh M."/>
            <person name="Kato T."/>
            <person name="Kawaji H."/>
            <person name="Kawagashira N."/>
            <person name="Kawashima T."/>
            <person name="Kojima M."/>
            <person name="Kondo S."/>
            <person name="Konno H."/>
            <person name="Nakano K."/>
            <person name="Ninomiya N."/>
            <person name="Nishio T."/>
            <person name="Okada M."/>
            <person name="Plessy C."/>
            <person name="Shibata K."/>
            <person name="Shiraki T."/>
            <person name="Suzuki S."/>
            <person name="Tagami M."/>
            <person name="Waki K."/>
            <person name="Watahiki A."/>
            <person name="Okamura-Oho Y."/>
            <person name="Suzuki H."/>
            <person name="Kawai J."/>
            <person name="Hayashizaki Y."/>
        </authorList>
    </citation>
    <scope>NUCLEOTIDE SEQUENCE [LARGE SCALE MRNA]</scope>
    <source>
        <strain>C57BL/6J</strain>
        <tissue>Eye</tissue>
    </source>
</reference>
<reference key="2">
    <citation type="journal article" date="2010" name="Cell">
        <title>A tissue-specific atlas of mouse protein phosphorylation and expression.</title>
        <authorList>
            <person name="Huttlin E.L."/>
            <person name="Jedrychowski M.P."/>
            <person name="Elias J.E."/>
            <person name="Goswami T."/>
            <person name="Rad R."/>
            <person name="Beausoleil S.A."/>
            <person name="Villen J."/>
            <person name="Haas W."/>
            <person name="Sowa M.E."/>
            <person name="Gygi S.P."/>
        </authorList>
    </citation>
    <scope>IDENTIFICATION BY MASS SPECTROMETRY [LARGE SCALE ANALYSIS]</scope>
    <source>
        <tissue>Brain</tissue>
        <tissue>Heart</tissue>
        <tissue>Kidney</tissue>
        <tissue>Liver</tissue>
        <tissue>Lung</tissue>
        <tissue>Pancreas</tissue>
        <tissue>Spleen</tissue>
    </source>
</reference>
<keyword id="KW-0349">Heme</keyword>
<keyword id="KW-0408">Iron</keyword>
<keyword id="KW-0472">Membrane</keyword>
<keyword id="KW-0479">Metal-binding</keyword>
<keyword id="KW-0503">Monooxygenase</keyword>
<keyword id="KW-0560">Oxidoreductase</keyword>
<keyword id="KW-1185">Reference proteome</keyword>
<keyword id="KW-0812">Transmembrane</keyword>
<keyword id="KW-1133">Transmembrane helix</keyword>
<organism>
    <name type="scientific">Mus musculus</name>
    <name type="common">Mouse</name>
    <dbReference type="NCBI Taxonomy" id="10090"/>
    <lineage>
        <taxon>Eukaryota</taxon>
        <taxon>Metazoa</taxon>
        <taxon>Chordata</taxon>
        <taxon>Craniata</taxon>
        <taxon>Vertebrata</taxon>
        <taxon>Euteleostomi</taxon>
        <taxon>Mammalia</taxon>
        <taxon>Eutheria</taxon>
        <taxon>Euarchontoglires</taxon>
        <taxon>Glires</taxon>
        <taxon>Rodentia</taxon>
        <taxon>Myomorpha</taxon>
        <taxon>Muroidea</taxon>
        <taxon>Muridae</taxon>
        <taxon>Murinae</taxon>
        <taxon>Mus</taxon>
        <taxon>Mus</taxon>
    </lineage>
</organism>
<feature type="chain" id="PRO_0000318096" description="Cytochrome P450 20A1">
    <location>
        <begin position="1"/>
        <end position="462"/>
    </location>
</feature>
<feature type="transmembrane region" description="Helical" evidence="2">
    <location>
        <begin position="4"/>
        <end position="24"/>
    </location>
</feature>
<feature type="binding site" description="axial binding residue" evidence="1">
    <location>
        <position position="409"/>
    </location>
    <ligand>
        <name>heme</name>
        <dbReference type="ChEBI" id="CHEBI:30413"/>
    </ligand>
    <ligandPart>
        <name>Fe</name>
        <dbReference type="ChEBI" id="CHEBI:18248"/>
    </ligandPart>
</feature>
<comment type="cofactor">
    <cofactor evidence="1">
        <name>heme</name>
        <dbReference type="ChEBI" id="CHEBI:30413"/>
    </cofactor>
</comment>
<comment type="subcellular location">
    <subcellularLocation>
        <location evidence="3">Membrane</location>
        <topology evidence="3">Single-pass membrane protein</topology>
    </subcellularLocation>
</comment>
<comment type="similarity">
    <text evidence="3">Belongs to the cytochrome P450 family.</text>
</comment>
<dbReference type="EC" id="1.14.-.-"/>
<dbReference type="EMBL" id="AK053388">
    <property type="protein sequence ID" value="BAC35373.1"/>
    <property type="molecule type" value="mRNA"/>
</dbReference>
<dbReference type="CCDS" id="CCDS14990.1"/>
<dbReference type="RefSeq" id="NP_084289.1">
    <property type="nucleotide sequence ID" value="NM_030013.3"/>
</dbReference>
<dbReference type="SMR" id="Q8BKE6"/>
<dbReference type="BioGRID" id="219044">
    <property type="interactions" value="4"/>
</dbReference>
<dbReference type="FunCoup" id="Q8BKE6">
    <property type="interactions" value="1961"/>
</dbReference>
<dbReference type="STRING" id="10090.ENSMUSP00000050823"/>
<dbReference type="GlyGen" id="Q8BKE6">
    <property type="glycosylation" value="1 site, 1 N-linked glycan (1 site)"/>
</dbReference>
<dbReference type="iPTMnet" id="Q8BKE6"/>
<dbReference type="PhosphoSitePlus" id="Q8BKE6"/>
<dbReference type="jPOST" id="Q8BKE6"/>
<dbReference type="PaxDb" id="10090-ENSMUSP00000050823"/>
<dbReference type="PeptideAtlas" id="Q8BKE6"/>
<dbReference type="ProteomicsDB" id="285274"/>
<dbReference type="Pumba" id="Q8BKE6"/>
<dbReference type="Antibodypedia" id="34163">
    <property type="antibodies" value="268 antibodies from 30 providers"/>
</dbReference>
<dbReference type="DNASU" id="77951"/>
<dbReference type="Ensembl" id="ENSMUST00000060608.13">
    <property type="protein sequence ID" value="ENSMUSP00000050823.7"/>
    <property type="gene ID" value="ENSMUSG00000049439.14"/>
</dbReference>
<dbReference type="GeneID" id="77951"/>
<dbReference type="KEGG" id="mmu:77951"/>
<dbReference type="UCSC" id="uc007bem.1">
    <property type="organism name" value="mouse"/>
</dbReference>
<dbReference type="AGR" id="MGI:1925201"/>
<dbReference type="CTD" id="57404"/>
<dbReference type="MGI" id="MGI:1925201">
    <property type="gene designation" value="Cyp20a1"/>
</dbReference>
<dbReference type="VEuPathDB" id="HostDB:ENSMUSG00000049439"/>
<dbReference type="eggNOG" id="KOG0157">
    <property type="taxonomic scope" value="Eukaryota"/>
</dbReference>
<dbReference type="GeneTree" id="ENSGT00500000044939"/>
<dbReference type="HOGENOM" id="CLU_050960_1_0_1"/>
<dbReference type="InParanoid" id="Q8BKE6"/>
<dbReference type="OMA" id="YFQVWSE"/>
<dbReference type="OrthoDB" id="45472at9989"/>
<dbReference type="PhylomeDB" id="Q8BKE6"/>
<dbReference type="TreeFam" id="TF105089"/>
<dbReference type="BioGRID-ORCS" id="77951">
    <property type="hits" value="2 hits in 77 CRISPR screens"/>
</dbReference>
<dbReference type="ChiTaRS" id="Cyp20a1">
    <property type="organism name" value="mouse"/>
</dbReference>
<dbReference type="PRO" id="PR:Q8BKE6"/>
<dbReference type="Proteomes" id="UP000000589">
    <property type="component" value="Chromosome 1"/>
</dbReference>
<dbReference type="RNAct" id="Q8BKE6">
    <property type="molecule type" value="protein"/>
</dbReference>
<dbReference type="Bgee" id="ENSMUSG00000049439">
    <property type="expression patterns" value="Expressed in indifferent gonad and 239 other cell types or tissues"/>
</dbReference>
<dbReference type="ExpressionAtlas" id="Q8BKE6">
    <property type="expression patterns" value="baseline and differential"/>
</dbReference>
<dbReference type="GO" id="GO:0016020">
    <property type="term" value="C:membrane"/>
    <property type="evidence" value="ECO:0007669"/>
    <property type="project" value="UniProtKB-SubCell"/>
</dbReference>
<dbReference type="GO" id="GO:0020037">
    <property type="term" value="F:heme binding"/>
    <property type="evidence" value="ECO:0007669"/>
    <property type="project" value="InterPro"/>
</dbReference>
<dbReference type="GO" id="GO:0005506">
    <property type="term" value="F:iron ion binding"/>
    <property type="evidence" value="ECO:0007669"/>
    <property type="project" value="InterPro"/>
</dbReference>
<dbReference type="GO" id="GO:0004497">
    <property type="term" value="F:monooxygenase activity"/>
    <property type="evidence" value="ECO:0007669"/>
    <property type="project" value="UniProtKB-KW"/>
</dbReference>
<dbReference type="GO" id="GO:0016705">
    <property type="term" value="F:oxidoreductase activity, acting on paired donors, with incorporation or reduction of molecular oxygen"/>
    <property type="evidence" value="ECO:0007669"/>
    <property type="project" value="InterPro"/>
</dbReference>
<dbReference type="CDD" id="cd20627">
    <property type="entry name" value="CYP20A1"/>
    <property type="match status" value="1"/>
</dbReference>
<dbReference type="Gene3D" id="1.10.630.10">
    <property type="entry name" value="Cytochrome P450"/>
    <property type="match status" value="1"/>
</dbReference>
<dbReference type="InterPro" id="IPR052666">
    <property type="entry name" value="CYP450_20A1-like"/>
</dbReference>
<dbReference type="InterPro" id="IPR001128">
    <property type="entry name" value="Cyt_P450"/>
</dbReference>
<dbReference type="InterPro" id="IPR002401">
    <property type="entry name" value="Cyt_P450_E_grp-I"/>
</dbReference>
<dbReference type="InterPro" id="IPR036396">
    <property type="entry name" value="Cyt_P450_sf"/>
</dbReference>
<dbReference type="PANTHER" id="PTHR24280">
    <property type="entry name" value="CYTOCHROME P450 20A1"/>
    <property type="match status" value="1"/>
</dbReference>
<dbReference type="PANTHER" id="PTHR24280:SF4">
    <property type="entry name" value="CYTOCHROME P450 20A1"/>
    <property type="match status" value="1"/>
</dbReference>
<dbReference type="Pfam" id="PF00067">
    <property type="entry name" value="p450"/>
    <property type="match status" value="1"/>
</dbReference>
<dbReference type="PRINTS" id="PR00463">
    <property type="entry name" value="EP450I"/>
</dbReference>
<dbReference type="SUPFAM" id="SSF48264">
    <property type="entry name" value="Cytochrome P450"/>
    <property type="match status" value="1"/>
</dbReference>
<accession>Q8BKE6</accession>
<name>CP20A_MOUSE</name>
<sequence length="462" mass="52149">MLDFAIFAVTFLLALVGAVLYLYPASRQASGIPGLTPTEEKDGNLPDIVNSGSLHEFLVNLHERYGPVVSFWFGRRLVVSLGTTDVLKQHFNPNKTSDPFETMLKSLLGYQSGGGSAGEDHVRRKLYGDAVTASLHSNFPLLLQLSEELLDKWLSYPETQHIPLSQHMLGFALKFVTRMVLGSTFEDEQEVIRFQKIHGTVWSEIGKGFLDGSLDKNTTRKKQYQEALMQLESTLKKIIKERKGGNFRQHTFIDSLTQGKLNEQQILEDCVVFSLASCIITARLCTWTIHFLTTTGEVQKKLCKEIDQVLGEGPITSEKIEQLSYCQQVLFETVRTAKLTPVSARLQDIEGKVGPFVIPKETLVLYALGVVLQDPSTWPLPHRFDPDRFADEPVMKVFSSLGFSGTWECPELRFAYMVTAVLVSVLLKRLRLLAVDRQVFEMKYELVTSAREEAWITVSKRH</sequence>
<gene>
    <name type="primary">Cyp20a1</name>
</gene>
<proteinExistence type="evidence at protein level"/>
<protein>
    <recommendedName>
        <fullName>Cytochrome P450 20A1</fullName>
        <ecNumber>1.14.-.-</ecNumber>
    </recommendedName>
</protein>
<evidence type="ECO:0000250" key="1"/>
<evidence type="ECO:0000255" key="2"/>
<evidence type="ECO:0000305" key="3"/>